<reference key="1">
    <citation type="journal article" date="1997" name="J. Bacteriol.">
        <title>Complete genome sequence of Methanobacterium thermoautotrophicum deltaH: functional analysis and comparative genomics.</title>
        <authorList>
            <person name="Smith D.R."/>
            <person name="Doucette-Stamm L.A."/>
            <person name="Deloughery C."/>
            <person name="Lee H.-M."/>
            <person name="Dubois J."/>
            <person name="Aldredge T."/>
            <person name="Bashirzadeh R."/>
            <person name="Blakely D."/>
            <person name="Cook R."/>
            <person name="Gilbert K."/>
            <person name="Harrison D."/>
            <person name="Hoang L."/>
            <person name="Keagle P."/>
            <person name="Lumm W."/>
            <person name="Pothier B."/>
            <person name="Qiu D."/>
            <person name="Spadafora R."/>
            <person name="Vicare R."/>
            <person name="Wang Y."/>
            <person name="Wierzbowski J."/>
            <person name="Gibson R."/>
            <person name="Jiwani N."/>
            <person name="Caruso A."/>
            <person name="Bush D."/>
            <person name="Safer H."/>
            <person name="Patwell D."/>
            <person name="Prabhakar S."/>
            <person name="McDougall S."/>
            <person name="Shimer G."/>
            <person name="Goyal A."/>
            <person name="Pietrovski S."/>
            <person name="Church G.M."/>
            <person name="Daniels C.J."/>
            <person name="Mao J.-I."/>
            <person name="Rice P."/>
            <person name="Noelling J."/>
            <person name="Reeve J.N."/>
        </authorList>
    </citation>
    <scope>NUCLEOTIDE SEQUENCE [LARGE SCALE GENOMIC DNA]</scope>
    <source>
        <strain>ATCC 29096 / DSM 1053 / JCM 10044 / NBRC 100330 / Delta H</strain>
    </source>
</reference>
<reference key="2">
    <citation type="journal article" date="2005" name="Nucleic Acids Res.">
        <title>Toxin-antitoxin loci are highly abundant in free-living but lost from host-associated prokaryotes.</title>
        <authorList>
            <person name="Pandey D.P."/>
            <person name="Gerdes K."/>
        </authorList>
    </citation>
    <scope>POSSIBLE FUNCTION</scope>
    <source>
        <strain>ATCC 29096 / DSM 1053 / JCM 10044 / NBRC 100330 / Delta H</strain>
    </source>
</reference>
<protein>
    <recommendedName>
        <fullName>Endoribonuclease Nob1</fullName>
        <shortName>RNase Nob1</shortName>
        <ecNumber evidence="3">3.1.-.-</ecNumber>
    </recommendedName>
    <alternativeName>
        <fullName>Endonuclease VapC2</fullName>
    </alternativeName>
    <alternativeName>
        <fullName evidence="3">Putative toxin VapC2</fullName>
    </alternativeName>
</protein>
<name>NOB1_METTH</name>
<organism>
    <name type="scientific">Methanothermobacter thermautotrophicus (strain ATCC 29096 / DSM 1053 / JCM 10044 / NBRC 100330 / Delta H)</name>
    <name type="common">Methanobacterium thermoautotrophicum</name>
    <dbReference type="NCBI Taxonomy" id="187420"/>
    <lineage>
        <taxon>Archaea</taxon>
        <taxon>Methanobacteriati</taxon>
        <taxon>Methanobacteriota</taxon>
        <taxon>Methanomada group</taxon>
        <taxon>Methanobacteria</taxon>
        <taxon>Methanobacteriales</taxon>
        <taxon>Methanobacteriaceae</taxon>
        <taxon>Methanothermobacter</taxon>
    </lineage>
</organism>
<dbReference type="EC" id="3.1.-.-" evidence="3"/>
<dbReference type="EMBL" id="AE000666">
    <property type="protein sequence ID" value="AAB86328.1"/>
    <property type="molecule type" value="Genomic_DNA"/>
</dbReference>
<dbReference type="PIR" id="B69116">
    <property type="entry name" value="B69116"/>
</dbReference>
<dbReference type="SMR" id="O27890"/>
<dbReference type="FunCoup" id="O27890">
    <property type="interactions" value="4"/>
</dbReference>
<dbReference type="STRING" id="187420.MTH_1862"/>
<dbReference type="PaxDb" id="187420-MTH_1862"/>
<dbReference type="EnsemblBacteria" id="AAB86328">
    <property type="protein sequence ID" value="AAB86328"/>
    <property type="gene ID" value="MTH_1862"/>
</dbReference>
<dbReference type="KEGG" id="mth:MTH_1862"/>
<dbReference type="PATRIC" id="fig|187420.15.peg.1816"/>
<dbReference type="HOGENOM" id="CLU_109674_0_0_2"/>
<dbReference type="InParanoid" id="O27890"/>
<dbReference type="Proteomes" id="UP000005223">
    <property type="component" value="Chromosome"/>
</dbReference>
<dbReference type="GO" id="GO:0030688">
    <property type="term" value="C:preribosome, small subunit precursor"/>
    <property type="evidence" value="ECO:0007669"/>
    <property type="project" value="TreeGrafter"/>
</dbReference>
<dbReference type="GO" id="GO:0000287">
    <property type="term" value="F:magnesium ion binding"/>
    <property type="evidence" value="ECO:0007669"/>
    <property type="project" value="UniProtKB-UniRule"/>
</dbReference>
<dbReference type="GO" id="GO:0004521">
    <property type="term" value="F:RNA endonuclease activity"/>
    <property type="evidence" value="ECO:0007669"/>
    <property type="project" value="TreeGrafter"/>
</dbReference>
<dbReference type="GO" id="GO:0019843">
    <property type="term" value="F:rRNA binding"/>
    <property type="evidence" value="ECO:0007669"/>
    <property type="project" value="UniProtKB-KW"/>
</dbReference>
<dbReference type="GO" id="GO:0030490">
    <property type="term" value="P:maturation of SSU-rRNA"/>
    <property type="evidence" value="ECO:0007669"/>
    <property type="project" value="TreeGrafter"/>
</dbReference>
<dbReference type="CDD" id="cd09876">
    <property type="entry name" value="PIN_Nob1-like"/>
    <property type="match status" value="1"/>
</dbReference>
<dbReference type="Gene3D" id="3.40.50.1010">
    <property type="entry name" value="5'-nuclease"/>
    <property type="match status" value="1"/>
</dbReference>
<dbReference type="HAMAP" id="MF_00265">
    <property type="entry name" value="VapC_Nob1"/>
    <property type="match status" value="1"/>
</dbReference>
<dbReference type="InterPro" id="IPR039907">
    <property type="entry name" value="NOB1"/>
</dbReference>
<dbReference type="InterPro" id="IPR002716">
    <property type="entry name" value="PIN_dom"/>
</dbReference>
<dbReference type="InterPro" id="IPR033411">
    <property type="entry name" value="Ribonuclease_PIN"/>
</dbReference>
<dbReference type="InterPro" id="IPR022907">
    <property type="entry name" value="VapC_family"/>
</dbReference>
<dbReference type="NCBIfam" id="NF009145">
    <property type="entry name" value="PRK12496.1-2"/>
    <property type="match status" value="1"/>
</dbReference>
<dbReference type="PANTHER" id="PTHR12814">
    <property type="entry name" value="RNA-BINDING PROTEIN NOB1"/>
    <property type="match status" value="1"/>
</dbReference>
<dbReference type="PANTHER" id="PTHR12814:SF2">
    <property type="entry name" value="RNA-BINDING PROTEIN NOB1"/>
    <property type="match status" value="1"/>
</dbReference>
<dbReference type="Pfam" id="PF17146">
    <property type="entry name" value="PIN_6"/>
    <property type="match status" value="1"/>
</dbReference>
<dbReference type="SMART" id="SM00670">
    <property type="entry name" value="PINc"/>
    <property type="match status" value="1"/>
</dbReference>
<sequence>MHIDNVVFMKKVLDASAFINGYVPEGRENYTVRSVTEEIRDFRSMMILEDALREGRLKITEPDPESMKVVEDAISESGDIMRLSPTDMEVIGLAVSLRGKDDVTVITDDYTIQNTLKILGIGFRSVLTSGIRDTYSWRRVCTGCRRVYPLDYEFEECEICGSRIVRKRHRN</sequence>
<evidence type="ECO:0000250" key="1"/>
<evidence type="ECO:0000255" key="2"/>
<evidence type="ECO:0000255" key="3">
    <source>
        <dbReference type="HAMAP-Rule" id="MF_00265"/>
    </source>
</evidence>
<evidence type="ECO:0000305" key="4"/>
<gene>
    <name type="primary">nob1</name>
    <name type="synonym">vapC2</name>
    <name type="ordered locus">MTH_1862</name>
</gene>
<keyword id="KW-0255">Endonuclease</keyword>
<keyword id="KW-0378">Hydrolase</keyword>
<keyword id="KW-0464">Manganese</keyword>
<keyword id="KW-0479">Metal-binding</keyword>
<keyword id="KW-0540">Nuclease</keyword>
<keyword id="KW-1185">Reference proteome</keyword>
<keyword id="KW-0690">Ribosome biogenesis</keyword>
<keyword id="KW-0694">RNA-binding</keyword>
<keyword id="KW-0699">rRNA-binding</keyword>
<keyword id="KW-1277">Toxin-antitoxin system</keyword>
<keyword id="KW-0862">Zinc</keyword>
<accession>O27890</accession>
<feature type="chain" id="PRO_0000156046" description="Endoribonuclease Nob1">
    <location>
        <begin position="1"/>
        <end position="171"/>
    </location>
</feature>
<feature type="domain" description="PINc" evidence="3">
    <location>
        <begin position="9"/>
        <end position="114"/>
    </location>
</feature>
<feature type="region of interest" description="Flexible linker" evidence="1">
    <location>
        <begin position="130"/>
        <end position="135"/>
    </location>
</feature>
<feature type="region of interest" description="Zinc ribbon" evidence="1">
    <location>
        <begin position="136"/>
        <end position="171"/>
    </location>
</feature>
<feature type="binding site" evidence="2">
    <location>
        <position position="14"/>
    </location>
    <ligand>
        <name>Mn(2+)</name>
        <dbReference type="ChEBI" id="CHEBI:29035"/>
    </ligand>
</feature>
<feature type="binding site" evidence="2">
    <location>
        <position position="133"/>
    </location>
    <ligand>
        <name>Mn(2+)</name>
        <dbReference type="ChEBI" id="CHEBI:29035"/>
    </ligand>
</feature>
<feature type="binding site" evidence="1">
    <location>
        <position position="141"/>
    </location>
    <ligand>
        <name>Zn(2+)</name>
        <dbReference type="ChEBI" id="CHEBI:29105"/>
    </ligand>
</feature>
<feature type="binding site" evidence="1">
    <location>
        <position position="144"/>
    </location>
    <ligand>
        <name>Zn(2+)</name>
        <dbReference type="ChEBI" id="CHEBI:29105"/>
    </ligand>
</feature>
<feature type="binding site" evidence="1">
    <location>
        <position position="157"/>
    </location>
    <ligand>
        <name>Zn(2+)</name>
        <dbReference type="ChEBI" id="CHEBI:29105"/>
    </ligand>
</feature>
<feature type="binding site" evidence="1">
    <location>
        <position position="160"/>
    </location>
    <ligand>
        <name>Zn(2+)</name>
        <dbReference type="ChEBI" id="CHEBI:29105"/>
    </ligand>
</feature>
<comment type="function">
    <text evidence="1">Toxic component of a type II toxin-antitoxin (TA) system. Processes pre-16S-rRNA at its 3' end (the D-site) to yield the mature 3' end (By similarity).</text>
</comment>
<comment type="cofactor">
    <cofactor evidence="4">
        <name>Mn(2+)</name>
        <dbReference type="ChEBI" id="CHEBI:29035"/>
    </cofactor>
</comment>
<comment type="cofactor">
    <cofactor evidence="1">
        <name>Zn(2+)</name>
        <dbReference type="ChEBI" id="CHEBI:29105"/>
    </cofactor>
    <text evidence="1">Binds 1 zinc ion per subunit.</text>
</comment>
<comment type="domain">
    <text evidence="1">Has 2 structurally independent domains; the N-terminal PINc domain which binds Mn(2+), rRNA substrate and probably has endoribonuclease activity, and the C-terminal zinc ribbon domain which also binds rRNA substrate.</text>
</comment>
<comment type="similarity">
    <text evidence="3">Belongs to the PINc/VapC protein family.</text>
</comment>
<proteinExistence type="inferred from homology"/>